<organism>
    <name type="scientific">Stenotrophomonas maltophilia (strain K279a)</name>
    <dbReference type="NCBI Taxonomy" id="522373"/>
    <lineage>
        <taxon>Bacteria</taxon>
        <taxon>Pseudomonadati</taxon>
        <taxon>Pseudomonadota</taxon>
        <taxon>Gammaproteobacteria</taxon>
        <taxon>Lysobacterales</taxon>
        <taxon>Lysobacteraceae</taxon>
        <taxon>Stenotrophomonas</taxon>
        <taxon>Stenotrophomonas maltophilia group</taxon>
    </lineage>
</organism>
<proteinExistence type="inferred from homology"/>
<accession>B2FPW9</accession>
<protein>
    <recommendedName>
        <fullName evidence="1">Beta-hexosaminidase</fullName>
        <ecNumber evidence="1">3.2.1.52</ecNumber>
    </recommendedName>
    <alternativeName>
        <fullName evidence="1">Beta-N-acetylhexosaminidase</fullName>
    </alternativeName>
    <alternativeName>
        <fullName evidence="1">N-acetyl-beta-glucosaminidase</fullName>
    </alternativeName>
</protein>
<comment type="function">
    <text evidence="1">Plays a role in peptidoglycan recycling by cleaving the terminal beta-1,4-linked N-acetylglucosamine (GlcNAc) from peptide-linked peptidoglycan fragments, giving rise to free GlcNAc, anhydro-N-acetylmuramic acid and anhydro-N-acetylmuramic acid-linked peptides.</text>
</comment>
<comment type="catalytic activity">
    <reaction evidence="1">
        <text>Hydrolysis of terminal non-reducing N-acetyl-D-hexosamine residues in N-acetyl-beta-D-hexosaminides.</text>
        <dbReference type="EC" id="3.2.1.52"/>
    </reaction>
</comment>
<comment type="pathway">
    <text evidence="1">Cell wall biogenesis; peptidoglycan recycling.</text>
</comment>
<comment type="subcellular location">
    <subcellularLocation>
        <location evidence="1">Cytoplasm</location>
    </subcellularLocation>
</comment>
<comment type="similarity">
    <text evidence="1">Belongs to the glycosyl hydrolase 3 family. NagZ subfamily.</text>
</comment>
<dbReference type="EC" id="3.2.1.52" evidence="1"/>
<dbReference type="EMBL" id="AM743169">
    <property type="protein sequence ID" value="CAQ46960.1"/>
    <property type="molecule type" value="Genomic_DNA"/>
</dbReference>
<dbReference type="RefSeq" id="WP_005414204.1">
    <property type="nucleotide sequence ID" value="NC_010943.1"/>
</dbReference>
<dbReference type="SMR" id="B2FPW9"/>
<dbReference type="CAZy" id="GH3">
    <property type="family name" value="Glycoside Hydrolase Family 3"/>
</dbReference>
<dbReference type="EnsemblBacteria" id="CAQ46960">
    <property type="protein sequence ID" value="CAQ46960"/>
    <property type="gene ID" value="Smlt3538"/>
</dbReference>
<dbReference type="KEGG" id="sml:Smlt3538"/>
<dbReference type="eggNOG" id="COG1472">
    <property type="taxonomic scope" value="Bacteria"/>
</dbReference>
<dbReference type="HOGENOM" id="CLU_008392_0_0_6"/>
<dbReference type="UniPathway" id="UPA00544"/>
<dbReference type="Proteomes" id="UP000008840">
    <property type="component" value="Chromosome"/>
</dbReference>
<dbReference type="GO" id="GO:0005737">
    <property type="term" value="C:cytoplasm"/>
    <property type="evidence" value="ECO:0007669"/>
    <property type="project" value="UniProtKB-SubCell"/>
</dbReference>
<dbReference type="GO" id="GO:0004563">
    <property type="term" value="F:beta-N-acetylhexosaminidase activity"/>
    <property type="evidence" value="ECO:0007669"/>
    <property type="project" value="UniProtKB-UniRule"/>
</dbReference>
<dbReference type="GO" id="GO:0005975">
    <property type="term" value="P:carbohydrate metabolic process"/>
    <property type="evidence" value="ECO:0007669"/>
    <property type="project" value="InterPro"/>
</dbReference>
<dbReference type="GO" id="GO:0051301">
    <property type="term" value="P:cell division"/>
    <property type="evidence" value="ECO:0007669"/>
    <property type="project" value="UniProtKB-KW"/>
</dbReference>
<dbReference type="GO" id="GO:0071555">
    <property type="term" value="P:cell wall organization"/>
    <property type="evidence" value="ECO:0007669"/>
    <property type="project" value="UniProtKB-KW"/>
</dbReference>
<dbReference type="GO" id="GO:0009252">
    <property type="term" value="P:peptidoglycan biosynthetic process"/>
    <property type="evidence" value="ECO:0007669"/>
    <property type="project" value="UniProtKB-KW"/>
</dbReference>
<dbReference type="GO" id="GO:0009254">
    <property type="term" value="P:peptidoglycan turnover"/>
    <property type="evidence" value="ECO:0007669"/>
    <property type="project" value="UniProtKB-UniRule"/>
</dbReference>
<dbReference type="GO" id="GO:0008360">
    <property type="term" value="P:regulation of cell shape"/>
    <property type="evidence" value="ECO:0007669"/>
    <property type="project" value="UniProtKB-KW"/>
</dbReference>
<dbReference type="FunFam" id="3.20.20.300:FF:000001">
    <property type="entry name" value="Beta-hexosaminidase"/>
    <property type="match status" value="1"/>
</dbReference>
<dbReference type="Gene3D" id="3.20.20.300">
    <property type="entry name" value="Glycoside hydrolase, family 3, N-terminal domain"/>
    <property type="match status" value="1"/>
</dbReference>
<dbReference type="HAMAP" id="MF_00364">
    <property type="entry name" value="NagZ"/>
    <property type="match status" value="1"/>
</dbReference>
<dbReference type="InterPro" id="IPR022956">
    <property type="entry name" value="Beta_hexosaminidase_bac"/>
</dbReference>
<dbReference type="InterPro" id="IPR019800">
    <property type="entry name" value="Glyco_hydro_3_AS"/>
</dbReference>
<dbReference type="InterPro" id="IPR001764">
    <property type="entry name" value="Glyco_hydro_3_N"/>
</dbReference>
<dbReference type="InterPro" id="IPR036962">
    <property type="entry name" value="Glyco_hydro_3_N_sf"/>
</dbReference>
<dbReference type="InterPro" id="IPR017853">
    <property type="entry name" value="Glycoside_hydrolase_SF"/>
</dbReference>
<dbReference type="InterPro" id="IPR050226">
    <property type="entry name" value="NagZ_Beta-hexosaminidase"/>
</dbReference>
<dbReference type="NCBIfam" id="NF003740">
    <property type="entry name" value="PRK05337.1"/>
    <property type="match status" value="1"/>
</dbReference>
<dbReference type="PANTHER" id="PTHR30480:SF13">
    <property type="entry name" value="BETA-HEXOSAMINIDASE"/>
    <property type="match status" value="1"/>
</dbReference>
<dbReference type="PANTHER" id="PTHR30480">
    <property type="entry name" value="BETA-HEXOSAMINIDASE-RELATED"/>
    <property type="match status" value="1"/>
</dbReference>
<dbReference type="Pfam" id="PF00933">
    <property type="entry name" value="Glyco_hydro_3"/>
    <property type="match status" value="1"/>
</dbReference>
<dbReference type="SUPFAM" id="SSF51445">
    <property type="entry name" value="(Trans)glycosidases"/>
    <property type="match status" value="1"/>
</dbReference>
<dbReference type="PROSITE" id="PS00775">
    <property type="entry name" value="GLYCOSYL_HYDROL_F3"/>
    <property type="match status" value="1"/>
</dbReference>
<sequence>MLLIGVAGTELTAQERDWLQHDAVAGVVLFKRNFASRQQVTDLSAAIRAAAPRPQLICVDQEGGRVQRFREGYSDLPPLQDIGALYATDPQQALALAERHAWLMASEVRASGLDLSFAPVVDLGRGNRAIGNRAFSEDPQVVAAFTAAYVRGMHSVGMAATLKHFPGHGTVLEDTHVDTAIDPRALDELRAQDLVPFQAGIAAGADAVMMAHVIYPQIAPEPAGYSPRWIQDILRGELGFRGVVFSDDIGMAASHSAGGVPARVHAHLDAGCDVVLVCHPELVDEALHAVQGRSLNTAALLGLIGRGALGWDGLLADARHGDTQTRLLETLGRTV</sequence>
<feature type="chain" id="PRO_1000121076" description="Beta-hexosaminidase">
    <location>
        <begin position="1"/>
        <end position="335"/>
    </location>
</feature>
<feature type="active site" description="Proton donor/acceptor" evidence="1">
    <location>
        <position position="176"/>
    </location>
</feature>
<feature type="active site" description="Nucleophile" evidence="1">
    <location>
        <position position="247"/>
    </location>
</feature>
<feature type="binding site" evidence="1">
    <location>
        <position position="60"/>
    </location>
    <ligand>
        <name>substrate</name>
    </ligand>
</feature>
<feature type="binding site" evidence="1">
    <location>
        <position position="68"/>
    </location>
    <ligand>
        <name>substrate</name>
    </ligand>
</feature>
<feature type="binding site" evidence="1">
    <location>
        <position position="133"/>
    </location>
    <ligand>
        <name>substrate</name>
    </ligand>
</feature>
<feature type="binding site" evidence="1">
    <location>
        <begin position="163"/>
        <end position="164"/>
    </location>
    <ligand>
        <name>substrate</name>
    </ligand>
</feature>
<feature type="site" description="Important for catalytic activity" evidence="1">
    <location>
        <position position="174"/>
    </location>
</feature>
<name>NAGZ_STRMK</name>
<evidence type="ECO:0000255" key="1">
    <source>
        <dbReference type="HAMAP-Rule" id="MF_00364"/>
    </source>
</evidence>
<gene>
    <name evidence="1" type="primary">nagZ</name>
    <name type="ordered locus">Smlt3538</name>
</gene>
<reference key="1">
    <citation type="journal article" date="2008" name="Genome Biol.">
        <title>The complete genome, comparative and functional analysis of Stenotrophomonas maltophilia reveals an organism heavily shielded by drug resistance determinants.</title>
        <authorList>
            <person name="Crossman L.C."/>
            <person name="Gould V.C."/>
            <person name="Dow J.M."/>
            <person name="Vernikos G.S."/>
            <person name="Okazaki A."/>
            <person name="Sebaihia M."/>
            <person name="Saunders D."/>
            <person name="Arrowsmith C."/>
            <person name="Carver T."/>
            <person name="Peters N."/>
            <person name="Adlem E."/>
            <person name="Kerhornou A."/>
            <person name="Lord A."/>
            <person name="Murphy L."/>
            <person name="Seeger K."/>
            <person name="Squares R."/>
            <person name="Rutter S."/>
            <person name="Quail M.A."/>
            <person name="Rajandream M.A."/>
            <person name="Harris D."/>
            <person name="Churcher C."/>
            <person name="Bentley S.D."/>
            <person name="Parkhill J."/>
            <person name="Thomson N.R."/>
            <person name="Avison M.B."/>
        </authorList>
    </citation>
    <scope>NUCLEOTIDE SEQUENCE [LARGE SCALE GENOMIC DNA]</scope>
    <source>
        <strain>K279a</strain>
    </source>
</reference>
<keyword id="KW-0131">Cell cycle</keyword>
<keyword id="KW-0132">Cell division</keyword>
<keyword id="KW-0133">Cell shape</keyword>
<keyword id="KW-0961">Cell wall biogenesis/degradation</keyword>
<keyword id="KW-0963">Cytoplasm</keyword>
<keyword id="KW-0326">Glycosidase</keyword>
<keyword id="KW-0378">Hydrolase</keyword>
<keyword id="KW-0573">Peptidoglycan synthesis</keyword>
<keyword id="KW-1185">Reference proteome</keyword>